<organism>
    <name type="scientific">Marinobacter nauticus (strain ATCC 700491 / DSM 11845 / VT8)</name>
    <name type="common">Marinobacter aquaeolei</name>
    <dbReference type="NCBI Taxonomy" id="351348"/>
    <lineage>
        <taxon>Bacteria</taxon>
        <taxon>Pseudomonadati</taxon>
        <taxon>Pseudomonadota</taxon>
        <taxon>Gammaproteobacteria</taxon>
        <taxon>Pseudomonadales</taxon>
        <taxon>Marinobacteraceae</taxon>
        <taxon>Marinobacter</taxon>
    </lineage>
</organism>
<evidence type="ECO:0000255" key="1">
    <source>
        <dbReference type="HAMAP-Rule" id="MF_01818"/>
    </source>
</evidence>
<dbReference type="EC" id="3.1.26.11" evidence="1"/>
<dbReference type="EMBL" id="CP000514">
    <property type="protein sequence ID" value="ABM19248.1"/>
    <property type="molecule type" value="Genomic_DNA"/>
</dbReference>
<dbReference type="RefSeq" id="WP_011785639.1">
    <property type="nucleotide sequence ID" value="NC_008740.1"/>
</dbReference>
<dbReference type="SMR" id="A1U2M9"/>
<dbReference type="STRING" id="351348.Maqu_2169"/>
<dbReference type="KEGG" id="maq:Maqu_2169"/>
<dbReference type="eggNOG" id="COG1234">
    <property type="taxonomic scope" value="Bacteria"/>
</dbReference>
<dbReference type="HOGENOM" id="CLU_031317_2_0_6"/>
<dbReference type="OrthoDB" id="9803916at2"/>
<dbReference type="Proteomes" id="UP000000998">
    <property type="component" value="Chromosome"/>
</dbReference>
<dbReference type="GO" id="GO:0042781">
    <property type="term" value="F:3'-tRNA processing endoribonuclease activity"/>
    <property type="evidence" value="ECO:0007669"/>
    <property type="project" value="UniProtKB-UniRule"/>
</dbReference>
<dbReference type="GO" id="GO:0008270">
    <property type="term" value="F:zinc ion binding"/>
    <property type="evidence" value="ECO:0007669"/>
    <property type="project" value="UniProtKB-UniRule"/>
</dbReference>
<dbReference type="CDD" id="cd07717">
    <property type="entry name" value="RNaseZ_ZiPD-like_MBL-fold"/>
    <property type="match status" value="1"/>
</dbReference>
<dbReference type="Gene3D" id="3.60.15.10">
    <property type="entry name" value="Ribonuclease Z/Hydroxyacylglutathione hydrolase-like"/>
    <property type="match status" value="1"/>
</dbReference>
<dbReference type="HAMAP" id="MF_01818">
    <property type="entry name" value="RNase_Z_BN"/>
    <property type="match status" value="1"/>
</dbReference>
<dbReference type="InterPro" id="IPR001279">
    <property type="entry name" value="Metallo-B-lactamas"/>
</dbReference>
<dbReference type="InterPro" id="IPR036866">
    <property type="entry name" value="RibonucZ/Hydroxyglut_hydro"/>
</dbReference>
<dbReference type="InterPro" id="IPR013471">
    <property type="entry name" value="RNase_Z/BN"/>
</dbReference>
<dbReference type="PANTHER" id="PTHR46018">
    <property type="entry name" value="ZINC PHOSPHODIESTERASE ELAC PROTEIN 1"/>
    <property type="match status" value="1"/>
</dbReference>
<dbReference type="PANTHER" id="PTHR46018:SF2">
    <property type="entry name" value="ZINC PHOSPHODIESTERASE ELAC PROTEIN 1"/>
    <property type="match status" value="1"/>
</dbReference>
<dbReference type="Pfam" id="PF00753">
    <property type="entry name" value="Lactamase_B"/>
    <property type="match status" value="1"/>
</dbReference>
<dbReference type="SUPFAM" id="SSF56281">
    <property type="entry name" value="Metallo-hydrolase/oxidoreductase"/>
    <property type="match status" value="1"/>
</dbReference>
<gene>
    <name evidence="1" type="primary">rnz</name>
    <name type="ordered locus">Maqu_2169</name>
</gene>
<accession>A1U2M9</accession>
<feature type="chain" id="PRO_1000070296" description="Ribonuclease Z">
    <location>
        <begin position="1"/>
        <end position="323"/>
    </location>
</feature>
<feature type="active site" description="Proton acceptor" evidence="1">
    <location>
        <position position="66"/>
    </location>
</feature>
<feature type="binding site" evidence="1">
    <location>
        <position position="62"/>
    </location>
    <ligand>
        <name>Zn(2+)</name>
        <dbReference type="ChEBI" id="CHEBI:29105"/>
        <label>1</label>
        <note>catalytic</note>
    </ligand>
</feature>
<feature type="binding site" evidence="1">
    <location>
        <position position="64"/>
    </location>
    <ligand>
        <name>Zn(2+)</name>
        <dbReference type="ChEBI" id="CHEBI:29105"/>
        <label>1</label>
        <note>catalytic</note>
    </ligand>
</feature>
<feature type="binding site" evidence="1">
    <location>
        <position position="66"/>
    </location>
    <ligand>
        <name>Zn(2+)</name>
        <dbReference type="ChEBI" id="CHEBI:29105"/>
        <label>2</label>
        <note>catalytic</note>
    </ligand>
</feature>
<feature type="binding site" evidence="1">
    <location>
        <position position="67"/>
    </location>
    <ligand>
        <name>Zn(2+)</name>
        <dbReference type="ChEBI" id="CHEBI:29105"/>
        <label>2</label>
        <note>catalytic</note>
    </ligand>
</feature>
<feature type="binding site" evidence="1">
    <location>
        <position position="140"/>
    </location>
    <ligand>
        <name>Zn(2+)</name>
        <dbReference type="ChEBI" id="CHEBI:29105"/>
        <label>1</label>
        <note>catalytic</note>
    </ligand>
</feature>
<feature type="binding site" evidence="1">
    <location>
        <position position="211"/>
    </location>
    <ligand>
        <name>Zn(2+)</name>
        <dbReference type="ChEBI" id="CHEBI:29105"/>
        <label>1</label>
        <note>catalytic</note>
    </ligand>
</feature>
<feature type="binding site" evidence="1">
    <location>
        <position position="211"/>
    </location>
    <ligand>
        <name>Zn(2+)</name>
        <dbReference type="ChEBI" id="CHEBI:29105"/>
        <label>2</label>
        <note>catalytic</note>
    </ligand>
</feature>
<feature type="binding site" evidence="1">
    <location>
        <position position="270"/>
    </location>
    <ligand>
        <name>Zn(2+)</name>
        <dbReference type="ChEBI" id="CHEBI:29105"/>
        <label>2</label>
        <note>catalytic</note>
    </ligand>
</feature>
<name>RNZ_MARN8</name>
<comment type="function">
    <text evidence="1">Zinc phosphodiesterase, which displays some tRNA 3'-processing endonuclease activity. Probably involved in tRNA maturation, by removing a 3'-trailer from precursor tRNA.</text>
</comment>
<comment type="catalytic activity">
    <reaction evidence="1">
        <text>Endonucleolytic cleavage of RNA, removing extra 3' nucleotides from tRNA precursor, generating 3' termini of tRNAs. A 3'-hydroxy group is left at the tRNA terminus and a 5'-phosphoryl group is left at the trailer molecule.</text>
        <dbReference type="EC" id="3.1.26.11"/>
    </reaction>
</comment>
<comment type="cofactor">
    <cofactor evidence="1">
        <name>Zn(2+)</name>
        <dbReference type="ChEBI" id="CHEBI:29105"/>
    </cofactor>
    <text evidence="1">Binds 2 Zn(2+) ions.</text>
</comment>
<comment type="subunit">
    <text evidence="1">Homodimer.</text>
</comment>
<comment type="similarity">
    <text evidence="1">Belongs to the RNase Z family.</text>
</comment>
<protein>
    <recommendedName>
        <fullName evidence="1">Ribonuclease Z</fullName>
        <shortName evidence="1">RNase Z</shortName>
        <ecNumber evidence="1">3.1.26.11</ecNumber>
    </recommendedName>
    <alternativeName>
        <fullName evidence="1">tRNA 3 endonuclease</fullName>
    </alternativeName>
    <alternativeName>
        <fullName evidence="1">tRNase Z</fullName>
    </alternativeName>
</protein>
<reference key="1">
    <citation type="journal article" date="2011" name="Appl. Environ. Microbiol.">
        <title>Genomic potential of Marinobacter aquaeolei, a biogeochemical 'opportunitroph'.</title>
        <authorList>
            <person name="Singer E."/>
            <person name="Webb E.A."/>
            <person name="Nelson W.C."/>
            <person name="Heidelberg J.F."/>
            <person name="Ivanova N."/>
            <person name="Pati A."/>
            <person name="Edwards K.J."/>
        </authorList>
    </citation>
    <scope>NUCLEOTIDE SEQUENCE [LARGE SCALE GENOMIC DNA]</scope>
    <source>
        <strain>ATCC 700491 / DSM 11845 / VT8</strain>
    </source>
</reference>
<keyword id="KW-0255">Endonuclease</keyword>
<keyword id="KW-0378">Hydrolase</keyword>
<keyword id="KW-0479">Metal-binding</keyword>
<keyword id="KW-0540">Nuclease</keyword>
<keyword id="KW-0819">tRNA processing</keyword>
<keyword id="KW-0862">Zinc</keyword>
<sequence>MEFTFLGTSAGTPTRSRNVTGLALCLSGPKPWYLVDCGEGTQHQLMRTRYSVMQLRAMFITHIHGDHIFGLPGLLTSASMLGRTEPLDIIAPPQVRRFIDAVIENSDSSLSYPLNFINSEAPDFYWQDDHLGVTNVALSHRVPCRAYVFTERNLERQLQKEKLVADGIEPGPQWGDLQKGKDVLLDDGRLLRSNDYTHIPRTARKIIVGGDNDTPELLKDACQGTHVLIHEATYTQDVADRVGPWPQHSSAQQVARFAQATKLPNLVLTHFSSRYQSAPGGSPHINQLAAEALQHYKGQLFLARDFDTYRLEKDFQLHKVDHN</sequence>
<proteinExistence type="inferred from homology"/>